<feature type="chain" id="PRO_0000221855" description="Shutoff protein">
    <location>
        <begin position="1"/>
        <end position="805"/>
    </location>
</feature>
<feature type="domain" description="RRM" evidence="1">
    <location>
        <begin position="348"/>
        <end position="466"/>
    </location>
</feature>
<feature type="region of interest" description="Disordered" evidence="2">
    <location>
        <begin position="1"/>
        <end position="88"/>
    </location>
</feature>
<feature type="region of interest" description="Binding to host EIF4G" evidence="1">
    <location>
        <begin position="280"/>
        <end position="345"/>
    </location>
</feature>
<feature type="region of interest" description="Disordered" evidence="2">
    <location>
        <begin position="684"/>
        <end position="805"/>
    </location>
</feature>
<feature type="compositionally biased region" description="Polar residues" evidence="2">
    <location>
        <begin position="18"/>
        <end position="29"/>
    </location>
</feature>
<feature type="compositionally biased region" description="Basic and acidic residues" evidence="2">
    <location>
        <begin position="59"/>
        <end position="70"/>
    </location>
</feature>
<feature type="compositionally biased region" description="Basic and acidic residues" evidence="2">
    <location>
        <begin position="79"/>
        <end position="88"/>
    </location>
</feature>
<feature type="compositionally biased region" description="Gly residues" evidence="2">
    <location>
        <begin position="726"/>
        <end position="742"/>
    </location>
</feature>
<feature type="compositionally biased region" description="Basic residues" evidence="2">
    <location>
        <begin position="754"/>
        <end position="763"/>
    </location>
</feature>
<feature type="modified residue" description="Phosphotyrosine; by host" evidence="1 6">
    <location>
        <position position="365"/>
    </location>
</feature>
<feature type="modified residue" description="Phosphotyrosine; by host" evidence="1 6">
    <location>
        <position position="682"/>
    </location>
</feature>
<feature type="mutagenesis site" description="Almost complete inhibition of ribosome shunting; when associated with F-682." evidence="6">
    <original>Y</original>
    <variation>F</variation>
    <location>
        <position position="365"/>
    </location>
</feature>
<feature type="mutagenesis site" description="Almost complete inhibition of ribosome shunting; when associated with F-365." evidence="6">
    <original>Y</original>
    <variation>F</variation>
    <location>
        <position position="682"/>
    </location>
</feature>
<comment type="function">
    <text evidence="1 10 11 12 13 14">Protein that inhibits host translation while promoting late viral translation by ribosome shunting. Blocks host cap-dependent translation by binding to eIF4G, displacing MKNK1 from cap initiation complexes and preventing EIF4E phosphorylation. Binds to the tripartite leader sequence of viral late mRNAs and recruits host eIF4G, PABPC1/poly-A binding protein and 40S ribosomes subunits on viral mRNAs, allowing ribosome shunting and efficient translation of late viral mRNAs even though conventional translation via ribosome scanning from the cap has been shut off in the host cell. During assembly, acts as a chaperone protein that helps hexon proteins assembly into trimers (Probable).</text>
</comment>
<comment type="subunit">
    <text evidence="1 4 5 7 9">Monomer. Interacts with hexon protein; this interaction allows chaperoning and trimerization of hexon proteins. Interacts (via N-terminus) with host initiation factor EIF4G (via C-terminus). Interacts (via RRM domain) with viral mRNAs that contain the tripartite leader; this interaction allows ribosome shunting and expression of viral late mRNAs.</text>
</comment>
<comment type="subcellular location">
    <subcellularLocation>
        <location evidence="1 3">Host cytoplasm</location>
    </subcellularLocation>
</comment>
<comment type="induction">
    <text evidence="1">Expressed in the late phase of the viral replicative cycle.</text>
</comment>
<comment type="PTM">
    <text evidence="1">Might be cleaved by the viral protease.</text>
</comment>
<comment type="PTM">
    <text evidence="1 6">Phosphorylated. Tyrosine phosphorylation enhances preferential binding to tripartite leader mRNAs and allows ribosome shunting.</text>
</comment>
<comment type="PTM">
    <text evidence="1 8">Methylated. Asymmetric dimethylation by host PRMT1 of the Arg/Gly-rich region may regulate shutoff protein binding to hexon and promote the capsid assembly in the nucleus.</text>
</comment>
<comment type="miscellaneous">
    <text evidence="1">All late proteins expressed from the major late promoter are produced by alternative splicing and alternative polyadenylation of the same gene giving rise to non-overlapping ORFs. A leader sequence is present in the N-terminus of all these mRNAs and is recognized by the viral shutoff protein to provide expression although conventional translation via ribosome scanning from the cap has been shut off in the host cell.</text>
</comment>
<comment type="similarity">
    <text evidence="1">Belongs to the adenoviridae shutoff protein family.</text>
</comment>
<gene>
    <name evidence="1" type="primary">L4</name>
</gene>
<name>SHUT_ADE02</name>
<keyword id="KW-0143">Chaperone</keyword>
<keyword id="KW-1262">Eukaryotic host gene expression shutoff by virus</keyword>
<keyword id="KW-1193">Eukaryotic host translation shutoff by virus</keyword>
<keyword id="KW-1035">Host cytoplasm</keyword>
<keyword id="KW-1190">Host gene expression shutoff by virus</keyword>
<keyword id="KW-0945">Host-virus interaction</keyword>
<keyword id="KW-1075">Inhibition of eukaryotic host translation factors by virus</keyword>
<keyword id="KW-0426">Late protein</keyword>
<keyword id="KW-0488">Methylation</keyword>
<keyword id="KW-0597">Phosphoprotein</keyword>
<keyword id="KW-1185">Reference proteome</keyword>
<keyword id="KW-0694">RNA-binding</keyword>
<keyword id="KW-1155">Translational shunt</keyword>
<keyword id="KW-0813">Transport</keyword>
<sequence length="805" mass="90138">MESVEKEDSLTAPFEFATTASTDAANAPTTFPVEAPPLEEEEVIIEQDPGFVSEDDEDRSVPTEDKKQDQDDAEANEEQVGRGDQRHGDYLDVGDDVLLKHLQRQCAIICDALQERSDVPLAIADVSLAYERHLFSPRVPPKRQENGTCEPNPRLNFYPVFAVPEVLATYHIFFQNCKIPLSCRANRSRADKQLALRQGAVIPDIASLDEVPKIFEGLGRDEKRAANALQQENSENESHCGVLVELEGDNARLAVLKRSIEVTHFAYPALNLPPKVMSTVMSELIVRRARPLERDANLQEQTEEGLPAVGDEQLARWLETREPADLEERRKLMMAAVLVTVELECMQRFFADPEMQRKLEETLHYTFRQGYVRQACKISNVELCNLVSYLGILHENRLGQNVLHSTLKGEARRDYVRDCVYLFLCYTWQTAMGVWQQCLEERNLKELQKLLKQNLKDLWTAFNERSVAAHLADIIFPERLLKTLQQGLPDFTSQSMLQNFRNFILERSGILPATCCALPSDFVPIKYRECPPPLWGHCYLLQLANYLAYHSDIMEDVSGDGLLECHCRCNLCTPHRSLVCNSQLLSESQIIGTFELQGPSPDEKSAAPGLKLTPGLWTSAYLRKFVPEDYHAHEIRFYEDQSRPPNAELTACVITQGHILGQLQAINKARQEFLLRKGRGVYLDPQSGEELNPIPPPPQPYQQPRALASQDGTQKEAAAAAAATHGRGGILGQSGRGGFGRGGGDDGRLGQPRRSFRGRRGVRRNTVTLGRIPLAGAPEIGNRSQHRYNLRSSGAAGTACSPTQP</sequence>
<proteinExistence type="evidence at protein level"/>
<evidence type="ECO:0000255" key="1">
    <source>
        <dbReference type="HAMAP-Rule" id="MF_04060"/>
    </source>
</evidence>
<evidence type="ECO:0000256" key="2">
    <source>
        <dbReference type="SAM" id="MobiDB-lite"/>
    </source>
</evidence>
<evidence type="ECO:0000269" key="3">
    <source>
    </source>
</evidence>
<evidence type="ECO:0000269" key="4">
    <source>
    </source>
</evidence>
<evidence type="ECO:0000269" key="5">
    <source>
    </source>
</evidence>
<evidence type="ECO:0000269" key="6">
    <source>
    </source>
</evidence>
<evidence type="ECO:0000269" key="7">
    <source>
    </source>
</evidence>
<evidence type="ECO:0000269" key="8">
    <source>
    </source>
</evidence>
<evidence type="ECO:0000269" key="9">
    <source>
    </source>
</evidence>
<evidence type="ECO:0000305" key="10">
    <source>
    </source>
</evidence>
<evidence type="ECO:0000305" key="11">
    <source>
    </source>
</evidence>
<evidence type="ECO:0000305" key="12">
    <source>
    </source>
</evidence>
<evidence type="ECO:0000305" key="13">
    <source>
    </source>
</evidence>
<evidence type="ECO:0000305" key="14">
    <source>
    </source>
</evidence>
<organismHost>
    <name type="scientific">Homo sapiens</name>
    <name type="common">Human</name>
    <dbReference type="NCBI Taxonomy" id="9606"/>
</organismHost>
<accession>P24932</accession>
<accession>P03268</accession>
<organism>
    <name type="scientific">Human adenovirus C serotype 2</name>
    <name type="common">HAdV-2</name>
    <name type="synonym">Human adenovirus 2</name>
    <dbReference type="NCBI Taxonomy" id="10515"/>
    <lineage>
        <taxon>Viruses</taxon>
        <taxon>Varidnaviria</taxon>
        <taxon>Bamfordvirae</taxon>
        <taxon>Preplasmiviricota</taxon>
        <taxon>Tectiliviricetes</taxon>
        <taxon>Rowavirales</taxon>
        <taxon>Adenoviridae</taxon>
        <taxon>Mastadenovirus</taxon>
        <taxon>Human mastadenovirus C</taxon>
    </lineage>
</organism>
<protein>
    <recommendedName>
        <fullName evidence="1">Shutoff protein</fullName>
    </recommendedName>
    <alternativeName>
        <fullName evidence="1">100 kDa protein</fullName>
        <shortName evidence="1">p100K</shortName>
    </alternativeName>
    <alternativeName>
        <fullName evidence="1">100K-chaperone protein</fullName>
    </alternativeName>
    <alternativeName>
        <fullName evidence="1">L4-100K</fullName>
    </alternativeName>
    <alternativeName>
        <fullName evidence="1">Shutoff protein 100K</fullName>
    </alternativeName>
</protein>
<dbReference type="EMBL" id="J01917">
    <property type="protein sequence ID" value="AAA92218.1"/>
    <property type="molecule type" value="Genomic_DNA"/>
</dbReference>
<dbReference type="PIR" id="B03838">
    <property type="entry name" value="WMADL2"/>
</dbReference>
<dbReference type="RefSeq" id="AP_000178.1">
    <property type="nucleotide sequence ID" value="AC_000007.1"/>
</dbReference>
<dbReference type="RefSeq" id="NP_040528.1">
    <property type="nucleotide sequence ID" value="NC_001405.1"/>
</dbReference>
<dbReference type="iPTMnet" id="P24932"/>
<dbReference type="GeneID" id="2653005"/>
<dbReference type="KEGG" id="vg:2653005"/>
<dbReference type="Proteomes" id="UP000008167">
    <property type="component" value="Segment"/>
</dbReference>
<dbReference type="GO" id="GO:0043657">
    <property type="term" value="C:host cell"/>
    <property type="evidence" value="ECO:0007669"/>
    <property type="project" value="GOC"/>
</dbReference>
<dbReference type="GO" id="GO:0030430">
    <property type="term" value="C:host cell cytoplasm"/>
    <property type="evidence" value="ECO:0007669"/>
    <property type="project" value="UniProtKB-SubCell"/>
</dbReference>
<dbReference type="GO" id="GO:0003723">
    <property type="term" value="F:RNA binding"/>
    <property type="evidence" value="ECO:0007669"/>
    <property type="project" value="UniProtKB-UniRule"/>
</dbReference>
<dbReference type="GO" id="GO:0019060">
    <property type="term" value="P:intracellular transport of viral protein in host cell"/>
    <property type="evidence" value="ECO:0007669"/>
    <property type="project" value="UniProtKB-UniRule"/>
</dbReference>
<dbReference type="GO" id="GO:0039657">
    <property type="term" value="P:symbiont-mediated suppression of host gene expression"/>
    <property type="evidence" value="ECO:0007669"/>
    <property type="project" value="UniProtKB-UniRule"/>
</dbReference>
<dbReference type="GO" id="GO:0039606">
    <property type="term" value="P:symbiont-mediated suppression of host translation initiation"/>
    <property type="evidence" value="ECO:0000269"/>
    <property type="project" value="SigSci"/>
</dbReference>
<dbReference type="GO" id="GO:0039704">
    <property type="term" value="P:viral translational shunt"/>
    <property type="evidence" value="ECO:0000314"/>
    <property type="project" value="UniProtKB"/>
</dbReference>
<dbReference type="HAMAP" id="MF_04060">
    <property type="entry name" value="ADV_SHUT"/>
    <property type="match status" value="1"/>
</dbReference>
<dbReference type="InterPro" id="IPR003381">
    <property type="entry name" value="L4"/>
</dbReference>
<dbReference type="Pfam" id="PF02438">
    <property type="entry name" value="Adeno_100"/>
    <property type="match status" value="1"/>
</dbReference>
<reference key="1">
    <citation type="journal article" date="1984" name="J. Biol. Chem.">
        <title>DNA sequences from the adenovirus 2 genome.</title>
        <authorList>
            <person name="Roberts R.J."/>
            <person name="O'Neill K.E."/>
            <person name="Yen C.E."/>
        </authorList>
    </citation>
    <scope>NUCLEOTIDE SEQUENCE [GENOMIC DNA] OF 1-509</scope>
</reference>
<reference key="2">
    <citation type="journal article" date="1979" name="Gene">
        <title>Nucleotide sequence of the EcoRI-F fragment of adenovirus 2 genome.</title>
        <authorList>
            <person name="Galibert F."/>
            <person name="Herisse J."/>
            <person name="Courtois G."/>
        </authorList>
    </citation>
    <scope>NUCLEOTIDE SEQUENCE [GENOMIC DNA] OF 510-805</scope>
</reference>
<reference key="3">
    <citation type="journal article" date="1982" name="Cell">
        <title>Assembly of adenovirus major capsid protein is mediated by a nonvirion protein.</title>
        <authorList>
            <person name="Cepko C.L."/>
            <person name="Sharp P.A."/>
        </authorList>
    </citation>
    <scope>FUNCTION</scope>
    <scope>INTERACTION WITH HEXON PROTEIN</scope>
</reference>
<reference key="4">
    <citation type="journal article" date="2003" name="EMBO J.">
        <title>Switch from capsid protein import to adenovirus assembly by cleavage of nuclear transport signals.</title>
        <authorList>
            <person name="Wodrich H."/>
            <person name="Guan T."/>
            <person name="Cingolani G."/>
            <person name="Von Seggern D."/>
            <person name="Nemerow G."/>
            <person name="Gerace L."/>
        </authorList>
    </citation>
    <scope>SUBCELLULAR LOCATION</scope>
    <source>
        <strain>Human adenovirus C serotype 5</strain>
    </source>
</reference>
<reference key="5">
    <citation type="journal article" date="2004" name="Genes Dev.">
        <title>Tethering of eIF4G to adenoviral mRNAs by viral 100k protein drives ribosome shunting.</title>
        <authorList>
            <person name="Xi Q."/>
            <person name="Cuesta R."/>
            <person name="Schneider R.J."/>
        </authorList>
    </citation>
    <scope>FUNCTION</scope>
    <scope>INTERACTION WITH HOST EIF4G AND VIRAL MRNAS</scope>
</reference>
<reference key="6">
    <citation type="journal article" date="2004" name="J. Virol.">
        <title>Structural basis for competitive inhibition of eIF4G-Mnk1 interaction by the adenovirus 100-kilodalton protein.</title>
        <authorList>
            <person name="Cuesta R."/>
            <person name="Xi Q."/>
            <person name="Schneider R.J."/>
        </authorList>
    </citation>
    <scope>FUNCTION</scope>
    <scope>INTERACTION WITH HOST EIF4G</scope>
</reference>
<reference key="7">
    <citation type="journal article" date="2005" name="J. Mol. Biol.">
        <title>The 100K-chaperone protein from adenovirus serotype 2 (Subgroup C) assists in trimerization and nuclear localization of hexons from subgroups C and B adenoviruses.</title>
        <authorList>
            <person name="Hong S.S."/>
            <person name="Szolajska E."/>
            <person name="Schoehn G."/>
            <person name="Franqueville L."/>
            <person name="Myhre S."/>
            <person name="Lindholm L."/>
            <person name="Ruigrok R.W."/>
            <person name="Boulanger P."/>
            <person name="Chroboczek J."/>
        </authorList>
    </citation>
    <scope>STRUCTURE BY ELECTRON MICROSCOPY</scope>
    <scope>FUNCTION</scope>
    <scope>SUBUNIT</scope>
    <scope>INTERACTION WITH HEXON PROTEIN</scope>
</reference>
<reference key="8">
    <citation type="journal article" date="2005" name="J. Virol.">
        <title>Regulation of translation by ribosome shunting through phosphotyrosine-dependent coupling of adenovirus protein 100k to viral mRNAs.</title>
        <authorList>
            <person name="Xi Q."/>
            <person name="Cuesta R."/>
            <person name="Schneider R.J."/>
        </authorList>
    </citation>
    <scope>FUNCTION</scope>
    <scope>PHOSPHORYLATION AT TYR-365 AND TYR-682</scope>
    <scope>MUTAGENESIS OF TYR-365 AND TYR-682</scope>
</reference>
<reference key="9">
    <citation type="journal article" date="2009" name="J. Virol.">
        <title>Arginine methylation of human adenovirus type 5 L4 100-kilodalton protein is required for efficient virus production.</title>
        <authorList>
            <person name="Koyuncu O.O."/>
            <person name="Dobner T."/>
        </authorList>
    </citation>
    <scope>METHYLATION AT ARG/GLY REGION</scope>
    <source>
        <strain>Human adenovirus C serotype 5</strain>
    </source>
</reference>
<reference key="10">
    <citation type="journal article" date="2011" name="Cell. Mol. Life Sci.">
        <title>Faithful chaperones.</title>
        <authorList>
            <person name="Szolajska E."/>
            <person name="Chroboczek J."/>
        </authorList>
    </citation>
    <scope>REVIEW</scope>
</reference>